<evidence type="ECO:0000305" key="1"/>
<accession>P28836</accession>
<proteinExistence type="inferred from homology"/>
<protein>
    <recommendedName>
        <fullName>Uncharacterized anhydro-N-acetylmuramic acid kinase-like protein</fullName>
    </recommendedName>
</protein>
<name>YOR3_YEREN</name>
<organism>
    <name type="scientific">Yersinia enterocolitica</name>
    <dbReference type="NCBI Taxonomy" id="630"/>
    <lineage>
        <taxon>Bacteria</taxon>
        <taxon>Pseudomonadati</taxon>
        <taxon>Pseudomonadota</taxon>
        <taxon>Gammaproteobacteria</taxon>
        <taxon>Enterobacterales</taxon>
        <taxon>Yersiniaceae</taxon>
        <taxon>Yersinia</taxon>
    </lineage>
</organism>
<dbReference type="EMBL" id="X60449">
    <property type="protein sequence ID" value="CAA42978.1"/>
    <property type="molecule type" value="Genomic_DNA"/>
</dbReference>
<dbReference type="PIR" id="S24831">
    <property type="entry name" value="S24831"/>
</dbReference>
<dbReference type="SMR" id="P28836"/>
<dbReference type="GO" id="GO:0005524">
    <property type="term" value="F:ATP binding"/>
    <property type="evidence" value="ECO:0007669"/>
    <property type="project" value="InterPro"/>
</dbReference>
<dbReference type="GO" id="GO:0016773">
    <property type="term" value="F:phosphotransferase activity, alcohol group as acceptor"/>
    <property type="evidence" value="ECO:0007669"/>
    <property type="project" value="InterPro"/>
</dbReference>
<dbReference type="GO" id="GO:0006040">
    <property type="term" value="P:amino sugar metabolic process"/>
    <property type="evidence" value="ECO:0007669"/>
    <property type="project" value="InterPro"/>
</dbReference>
<dbReference type="GO" id="GO:0009254">
    <property type="term" value="P:peptidoglycan turnover"/>
    <property type="evidence" value="ECO:0007669"/>
    <property type="project" value="InterPro"/>
</dbReference>
<dbReference type="Gene3D" id="3.30.420.40">
    <property type="match status" value="1"/>
</dbReference>
<dbReference type="InterPro" id="IPR005338">
    <property type="entry name" value="Anhydro_N_Ac-Mur_kinase"/>
</dbReference>
<dbReference type="InterPro" id="IPR043129">
    <property type="entry name" value="ATPase_NBD"/>
</dbReference>
<dbReference type="PANTHER" id="PTHR30605">
    <property type="entry name" value="ANHYDRO-N-ACETYLMURAMIC ACID KINASE"/>
    <property type="match status" value="1"/>
</dbReference>
<dbReference type="PANTHER" id="PTHR30605:SF0">
    <property type="entry name" value="ANHYDRO-N-ACETYLMURAMIC ACID KINASE"/>
    <property type="match status" value="1"/>
</dbReference>
<dbReference type="Pfam" id="PF03702">
    <property type="entry name" value="AnmK"/>
    <property type="match status" value="1"/>
</dbReference>
<dbReference type="SUPFAM" id="SSF53067">
    <property type="entry name" value="Actin-like ATPase domain"/>
    <property type="match status" value="1"/>
</dbReference>
<sequence length="125" mass="13545">MYSDPYFAKPAPKSTGREYFNAGWLDKQLNKIPGIKPEDVQATLAELTALSVAEQVQLAGGCERLLVCGGGARNPLVMSRMSTLLPGTEVCVTDDFGVSGDDMEALHSPGWLFEPCPVNRVIYPQ</sequence>
<comment type="similarity">
    <text evidence="1">Belongs to the anhydro-N-acetylmuramic acid kinase family.</text>
</comment>
<feature type="chain" id="PRO_0000214824" description="Uncharacterized anhydro-N-acetylmuramic acid kinase-like protein">
    <location>
        <begin position="1"/>
        <end position="125"/>
    </location>
</feature>
<reference key="1">
    <citation type="submission" date="1991-09" db="EMBL/GenBank/DDBJ databases">
        <authorList>
            <person name="Baeumler A.J."/>
        </authorList>
    </citation>
    <scope>NUCLEOTIDE SEQUENCE [GENOMIC DNA]</scope>
    <source>
        <strain>ATCC 51872 / WA-C / Serotype O:8</strain>
    </source>
</reference>